<accession>A5N4R2</accession>
<comment type="function">
    <text evidence="1">This protein binds to the 23S rRNA, and is important in its secondary structure. It is located near the subunit interface in the base of the L7/L12 stalk, and near the tRNA binding site of the peptidyltransferase center.</text>
</comment>
<comment type="subunit">
    <text evidence="1">Part of the 50S ribosomal subunit.</text>
</comment>
<comment type="similarity">
    <text evidence="1">Belongs to the universal ribosomal protein uL6 family.</text>
</comment>
<sequence>MSRIGKLPIAIPAGVTFTVTPDNVVTVKGSKGQLVKAMAKDINIAVEDNSVVVTRNDDEKKSRSLHGLTRALINNMVVGVTEGYSKTLELIGVGYRAQLQGKKLVMNLGFSHPVEIEAVEGVTFETPAATKVVIKGIDKELVGNVAADIRSWRKPEPYKGKGIKYDNEVIRRKEGKTGKK</sequence>
<gene>
    <name evidence="1" type="primary">rplF</name>
    <name type="ordered locus">CKL_0239</name>
</gene>
<proteinExistence type="inferred from homology"/>
<protein>
    <recommendedName>
        <fullName evidence="1">Large ribosomal subunit protein uL6</fullName>
    </recommendedName>
    <alternativeName>
        <fullName evidence="2">50S ribosomal protein L6</fullName>
    </alternativeName>
</protein>
<dbReference type="EMBL" id="CP000673">
    <property type="protein sequence ID" value="EDK32293.1"/>
    <property type="molecule type" value="Genomic_DNA"/>
</dbReference>
<dbReference type="RefSeq" id="WP_011988818.1">
    <property type="nucleotide sequence ID" value="NC_009706.1"/>
</dbReference>
<dbReference type="SMR" id="A5N4R2"/>
<dbReference type="STRING" id="431943.CKL_0239"/>
<dbReference type="KEGG" id="ckl:CKL_0239"/>
<dbReference type="eggNOG" id="COG0097">
    <property type="taxonomic scope" value="Bacteria"/>
</dbReference>
<dbReference type="HOGENOM" id="CLU_065464_1_2_9"/>
<dbReference type="Proteomes" id="UP000002411">
    <property type="component" value="Chromosome"/>
</dbReference>
<dbReference type="GO" id="GO:0022625">
    <property type="term" value="C:cytosolic large ribosomal subunit"/>
    <property type="evidence" value="ECO:0007669"/>
    <property type="project" value="TreeGrafter"/>
</dbReference>
<dbReference type="GO" id="GO:0019843">
    <property type="term" value="F:rRNA binding"/>
    <property type="evidence" value="ECO:0007669"/>
    <property type="project" value="UniProtKB-UniRule"/>
</dbReference>
<dbReference type="GO" id="GO:0003735">
    <property type="term" value="F:structural constituent of ribosome"/>
    <property type="evidence" value="ECO:0007669"/>
    <property type="project" value="InterPro"/>
</dbReference>
<dbReference type="GO" id="GO:0002181">
    <property type="term" value="P:cytoplasmic translation"/>
    <property type="evidence" value="ECO:0007669"/>
    <property type="project" value="TreeGrafter"/>
</dbReference>
<dbReference type="FunFam" id="3.90.930.12:FF:000001">
    <property type="entry name" value="50S ribosomal protein L6"/>
    <property type="match status" value="1"/>
</dbReference>
<dbReference type="FunFam" id="3.90.930.12:FF:000002">
    <property type="entry name" value="50S ribosomal protein L6"/>
    <property type="match status" value="1"/>
</dbReference>
<dbReference type="Gene3D" id="3.90.930.12">
    <property type="entry name" value="Ribosomal protein L6, alpha-beta domain"/>
    <property type="match status" value="2"/>
</dbReference>
<dbReference type="HAMAP" id="MF_01365_B">
    <property type="entry name" value="Ribosomal_uL6_B"/>
    <property type="match status" value="1"/>
</dbReference>
<dbReference type="InterPro" id="IPR000702">
    <property type="entry name" value="Ribosomal_uL6-like"/>
</dbReference>
<dbReference type="InterPro" id="IPR036789">
    <property type="entry name" value="Ribosomal_uL6-like_a/b-dom_sf"/>
</dbReference>
<dbReference type="InterPro" id="IPR020040">
    <property type="entry name" value="Ribosomal_uL6_a/b-dom"/>
</dbReference>
<dbReference type="InterPro" id="IPR019906">
    <property type="entry name" value="Ribosomal_uL6_bac-type"/>
</dbReference>
<dbReference type="InterPro" id="IPR002358">
    <property type="entry name" value="Ribosomal_uL6_CS"/>
</dbReference>
<dbReference type="NCBIfam" id="TIGR03654">
    <property type="entry name" value="L6_bact"/>
    <property type="match status" value="1"/>
</dbReference>
<dbReference type="PANTHER" id="PTHR11655">
    <property type="entry name" value="60S/50S RIBOSOMAL PROTEIN L6/L9"/>
    <property type="match status" value="1"/>
</dbReference>
<dbReference type="PANTHER" id="PTHR11655:SF14">
    <property type="entry name" value="LARGE RIBOSOMAL SUBUNIT PROTEIN UL6M"/>
    <property type="match status" value="1"/>
</dbReference>
<dbReference type="Pfam" id="PF00347">
    <property type="entry name" value="Ribosomal_L6"/>
    <property type="match status" value="2"/>
</dbReference>
<dbReference type="PIRSF" id="PIRSF002162">
    <property type="entry name" value="Ribosomal_L6"/>
    <property type="match status" value="1"/>
</dbReference>
<dbReference type="PRINTS" id="PR00059">
    <property type="entry name" value="RIBOSOMALL6"/>
</dbReference>
<dbReference type="SUPFAM" id="SSF56053">
    <property type="entry name" value="Ribosomal protein L6"/>
    <property type="match status" value="2"/>
</dbReference>
<dbReference type="PROSITE" id="PS00525">
    <property type="entry name" value="RIBOSOMAL_L6_1"/>
    <property type="match status" value="1"/>
</dbReference>
<reference key="1">
    <citation type="journal article" date="2008" name="Proc. Natl. Acad. Sci. U.S.A.">
        <title>The genome of Clostridium kluyveri, a strict anaerobe with unique metabolic features.</title>
        <authorList>
            <person name="Seedorf H."/>
            <person name="Fricke W.F."/>
            <person name="Veith B."/>
            <person name="Brueggemann H."/>
            <person name="Liesegang H."/>
            <person name="Strittmatter A."/>
            <person name="Miethke M."/>
            <person name="Buckel W."/>
            <person name="Hinderberger J."/>
            <person name="Li F."/>
            <person name="Hagemeier C."/>
            <person name="Thauer R.K."/>
            <person name="Gottschalk G."/>
        </authorList>
    </citation>
    <scope>NUCLEOTIDE SEQUENCE [LARGE SCALE GENOMIC DNA]</scope>
    <source>
        <strain>ATCC 8527 / DSM 555 / NBRC 12016 / NCIMB 10680 / K1</strain>
    </source>
</reference>
<organism>
    <name type="scientific">Clostridium kluyveri (strain ATCC 8527 / DSM 555 / NBRC 12016 / NCIMB 10680 / K1)</name>
    <dbReference type="NCBI Taxonomy" id="431943"/>
    <lineage>
        <taxon>Bacteria</taxon>
        <taxon>Bacillati</taxon>
        <taxon>Bacillota</taxon>
        <taxon>Clostridia</taxon>
        <taxon>Eubacteriales</taxon>
        <taxon>Clostridiaceae</taxon>
        <taxon>Clostridium</taxon>
    </lineage>
</organism>
<evidence type="ECO:0000255" key="1">
    <source>
        <dbReference type="HAMAP-Rule" id="MF_01365"/>
    </source>
</evidence>
<evidence type="ECO:0000305" key="2"/>
<feature type="chain" id="PRO_1000087036" description="Large ribosomal subunit protein uL6">
    <location>
        <begin position="1"/>
        <end position="180"/>
    </location>
</feature>
<keyword id="KW-1185">Reference proteome</keyword>
<keyword id="KW-0687">Ribonucleoprotein</keyword>
<keyword id="KW-0689">Ribosomal protein</keyword>
<keyword id="KW-0694">RNA-binding</keyword>
<keyword id="KW-0699">rRNA-binding</keyword>
<name>RL6_CLOK5</name>